<feature type="chain" id="PRO_1000073841" description="Argininosuccinate lyase">
    <location>
        <begin position="1"/>
        <end position="493"/>
    </location>
</feature>
<organism>
    <name type="scientific">Clavibacter sepedonicus</name>
    <name type="common">Clavibacter michiganensis subsp. sepedonicus</name>
    <dbReference type="NCBI Taxonomy" id="31964"/>
    <lineage>
        <taxon>Bacteria</taxon>
        <taxon>Bacillati</taxon>
        <taxon>Actinomycetota</taxon>
        <taxon>Actinomycetes</taxon>
        <taxon>Micrococcales</taxon>
        <taxon>Microbacteriaceae</taxon>
        <taxon>Clavibacter</taxon>
    </lineage>
</organism>
<sequence length="493" mass="52529">MTESTDPSSRAGEAGALWGGRFAGGPSPELVALSRSTHFDWQLAPYDIAGSRAHARALAAAGYLSDAERQAMLQALDTLEDRVRSGALVASEADEDVHGALERGLMDIAGPDLGGKLRAGRSRNDQIATLVRMYLRDHAAVIHAMLVQLVDALAAQAEAAGGAIMPGRTHLQHAQPVLLAHHLLAHCWPLVRDLERLADWDARADVSPYGSGALAGSTLGLDASAVARDLGFARSSENSIDGTAARDVVAEFAFVLAQVGIDLSRLSEEIILWNTREFGFVTLSDSFSTGSSIMPQKKNPDIAELARGKSGRLIGNLSGLLATLKGLPLAYNRDLQEDKEPVFDSVQTLEVLLPAFTGMIATLRFDVDRMAELAPQGFSLATDVAEWLVKHRVAFRDAHEITGELVKLAESRGVGLEDLSDDDLRAVSPHLVPEVREVLSIDGSVASRDGVGGTARVRVDEQRAELVRRVAELRARADAAAERRAAASAAASA</sequence>
<evidence type="ECO:0000255" key="1">
    <source>
        <dbReference type="HAMAP-Rule" id="MF_00006"/>
    </source>
</evidence>
<keyword id="KW-0028">Amino-acid biosynthesis</keyword>
<keyword id="KW-0055">Arginine biosynthesis</keyword>
<keyword id="KW-0963">Cytoplasm</keyword>
<keyword id="KW-0456">Lyase</keyword>
<dbReference type="EC" id="4.3.2.1" evidence="1"/>
<dbReference type="EMBL" id="AM849034">
    <property type="protein sequence ID" value="CAQ01353.1"/>
    <property type="molecule type" value="Genomic_DNA"/>
</dbReference>
<dbReference type="RefSeq" id="WP_012298631.1">
    <property type="nucleotide sequence ID" value="NZ_MZMN01000003.1"/>
</dbReference>
<dbReference type="SMR" id="B0RHD6"/>
<dbReference type="STRING" id="31964.CMS1237"/>
<dbReference type="KEGG" id="cms:CMS1237"/>
<dbReference type="eggNOG" id="COG0165">
    <property type="taxonomic scope" value="Bacteria"/>
</dbReference>
<dbReference type="HOGENOM" id="CLU_027272_2_2_11"/>
<dbReference type="OrthoDB" id="9769623at2"/>
<dbReference type="UniPathway" id="UPA00068">
    <property type="reaction ID" value="UER00114"/>
</dbReference>
<dbReference type="Proteomes" id="UP000001318">
    <property type="component" value="Chromosome"/>
</dbReference>
<dbReference type="GO" id="GO:0005829">
    <property type="term" value="C:cytosol"/>
    <property type="evidence" value="ECO:0007669"/>
    <property type="project" value="TreeGrafter"/>
</dbReference>
<dbReference type="GO" id="GO:0004056">
    <property type="term" value="F:argininosuccinate lyase activity"/>
    <property type="evidence" value="ECO:0007669"/>
    <property type="project" value="UniProtKB-UniRule"/>
</dbReference>
<dbReference type="GO" id="GO:0042450">
    <property type="term" value="P:arginine biosynthetic process via ornithine"/>
    <property type="evidence" value="ECO:0007669"/>
    <property type="project" value="InterPro"/>
</dbReference>
<dbReference type="GO" id="GO:0006526">
    <property type="term" value="P:L-arginine biosynthetic process"/>
    <property type="evidence" value="ECO:0007669"/>
    <property type="project" value="UniProtKB-UniRule"/>
</dbReference>
<dbReference type="CDD" id="cd01359">
    <property type="entry name" value="Argininosuccinate_lyase"/>
    <property type="match status" value="1"/>
</dbReference>
<dbReference type="FunFam" id="1.10.40.30:FF:000001">
    <property type="entry name" value="Argininosuccinate lyase"/>
    <property type="match status" value="1"/>
</dbReference>
<dbReference type="FunFam" id="1.20.200.10:FF:000015">
    <property type="entry name" value="argininosuccinate lyase isoform X2"/>
    <property type="match status" value="1"/>
</dbReference>
<dbReference type="Gene3D" id="1.10.40.30">
    <property type="entry name" value="Fumarase/aspartase (C-terminal domain)"/>
    <property type="match status" value="1"/>
</dbReference>
<dbReference type="Gene3D" id="1.20.200.10">
    <property type="entry name" value="Fumarase/aspartase (Central domain)"/>
    <property type="match status" value="1"/>
</dbReference>
<dbReference type="Gene3D" id="1.10.275.10">
    <property type="entry name" value="Fumarase/aspartase (N-terminal domain)"/>
    <property type="match status" value="1"/>
</dbReference>
<dbReference type="HAMAP" id="MF_00006">
    <property type="entry name" value="Arg_succ_lyase"/>
    <property type="match status" value="1"/>
</dbReference>
<dbReference type="InterPro" id="IPR029419">
    <property type="entry name" value="Arg_succ_lyase_C"/>
</dbReference>
<dbReference type="InterPro" id="IPR009049">
    <property type="entry name" value="Argininosuccinate_lyase"/>
</dbReference>
<dbReference type="InterPro" id="IPR024083">
    <property type="entry name" value="Fumarase/histidase_N"/>
</dbReference>
<dbReference type="InterPro" id="IPR020557">
    <property type="entry name" value="Fumarate_lyase_CS"/>
</dbReference>
<dbReference type="InterPro" id="IPR000362">
    <property type="entry name" value="Fumarate_lyase_fam"/>
</dbReference>
<dbReference type="InterPro" id="IPR022761">
    <property type="entry name" value="Fumarate_lyase_N"/>
</dbReference>
<dbReference type="InterPro" id="IPR008948">
    <property type="entry name" value="L-Aspartase-like"/>
</dbReference>
<dbReference type="NCBIfam" id="TIGR00838">
    <property type="entry name" value="argH"/>
    <property type="match status" value="1"/>
</dbReference>
<dbReference type="PANTHER" id="PTHR43814">
    <property type="entry name" value="ARGININOSUCCINATE LYASE"/>
    <property type="match status" value="1"/>
</dbReference>
<dbReference type="PANTHER" id="PTHR43814:SF1">
    <property type="entry name" value="ARGININOSUCCINATE LYASE"/>
    <property type="match status" value="1"/>
</dbReference>
<dbReference type="Pfam" id="PF14698">
    <property type="entry name" value="ASL_C2"/>
    <property type="match status" value="1"/>
</dbReference>
<dbReference type="Pfam" id="PF00206">
    <property type="entry name" value="Lyase_1"/>
    <property type="match status" value="1"/>
</dbReference>
<dbReference type="PRINTS" id="PR00145">
    <property type="entry name" value="ARGSUCLYASE"/>
</dbReference>
<dbReference type="PRINTS" id="PR00149">
    <property type="entry name" value="FUMRATELYASE"/>
</dbReference>
<dbReference type="SUPFAM" id="SSF48557">
    <property type="entry name" value="L-aspartase-like"/>
    <property type="match status" value="1"/>
</dbReference>
<dbReference type="PROSITE" id="PS00163">
    <property type="entry name" value="FUMARATE_LYASES"/>
    <property type="match status" value="1"/>
</dbReference>
<reference key="1">
    <citation type="journal article" date="2008" name="J. Bacteriol.">
        <title>Genome of the actinomycete plant pathogen Clavibacter michiganensis subsp. sepedonicus suggests recent niche adaptation.</title>
        <authorList>
            <person name="Bentley S.D."/>
            <person name="Corton C."/>
            <person name="Brown S.E."/>
            <person name="Barron A."/>
            <person name="Clark L."/>
            <person name="Doggett J."/>
            <person name="Harris B."/>
            <person name="Ormond D."/>
            <person name="Quail M.A."/>
            <person name="May G."/>
            <person name="Francis D."/>
            <person name="Knudson D."/>
            <person name="Parkhill J."/>
            <person name="Ishimaru C.A."/>
        </authorList>
    </citation>
    <scope>NUCLEOTIDE SEQUENCE [LARGE SCALE GENOMIC DNA]</scope>
    <source>
        <strain>ATCC 33113 / DSM 20744 / JCM 9667 / LMG 2889 / ICMP 2535 / C-1</strain>
    </source>
</reference>
<accession>B0RHD6</accession>
<gene>
    <name evidence="1" type="primary">argH</name>
    <name type="ordered locus">CMS1237</name>
</gene>
<name>ARLY_CLASE</name>
<comment type="catalytic activity">
    <reaction evidence="1">
        <text>2-(N(omega)-L-arginino)succinate = fumarate + L-arginine</text>
        <dbReference type="Rhea" id="RHEA:24020"/>
        <dbReference type="ChEBI" id="CHEBI:29806"/>
        <dbReference type="ChEBI" id="CHEBI:32682"/>
        <dbReference type="ChEBI" id="CHEBI:57472"/>
        <dbReference type="EC" id="4.3.2.1"/>
    </reaction>
</comment>
<comment type="pathway">
    <text evidence="1">Amino-acid biosynthesis; L-arginine biosynthesis; L-arginine from L-ornithine and carbamoyl phosphate: step 3/3.</text>
</comment>
<comment type="subcellular location">
    <subcellularLocation>
        <location evidence="1">Cytoplasm</location>
    </subcellularLocation>
</comment>
<comment type="similarity">
    <text evidence="1">Belongs to the lyase 1 family. Argininosuccinate lyase subfamily.</text>
</comment>
<proteinExistence type="inferred from homology"/>
<protein>
    <recommendedName>
        <fullName evidence="1">Argininosuccinate lyase</fullName>
        <shortName evidence="1">ASAL</shortName>
        <ecNumber evidence="1">4.3.2.1</ecNumber>
    </recommendedName>
    <alternativeName>
        <fullName evidence="1">Arginosuccinase</fullName>
    </alternativeName>
</protein>